<proteinExistence type="evidence at protein level"/>
<organism>
    <name type="scientific">Aeropyrum pernix (strain ATCC 700893 / DSM 11879 / JCM 9820 / NBRC 100138 / K1)</name>
    <dbReference type="NCBI Taxonomy" id="272557"/>
    <lineage>
        <taxon>Archaea</taxon>
        <taxon>Thermoproteota</taxon>
        <taxon>Thermoprotei</taxon>
        <taxon>Desulfurococcales</taxon>
        <taxon>Desulfurococcaceae</taxon>
        <taxon>Aeropyrum</taxon>
    </lineage>
</organism>
<protein>
    <recommendedName>
        <fullName evidence="1">Probable Brix domain-containing ribosomal biogenesis protein</fullName>
    </recommendedName>
</protein>
<feature type="chain" id="PRO_0000120266" description="Probable Brix domain-containing ribosomal biogenesis protein">
    <location>
        <begin position="1"/>
        <end position="180"/>
    </location>
</feature>
<feature type="domain" description="Brix" evidence="1">
    <location>
        <begin position="1"/>
        <end position="178"/>
    </location>
</feature>
<feature type="strand" evidence="2">
    <location>
        <begin position="1"/>
        <end position="6"/>
    </location>
</feature>
<feature type="helix" evidence="2">
    <location>
        <begin position="9"/>
        <end position="19"/>
    </location>
</feature>
<feature type="strand" evidence="2">
    <location>
        <begin position="25"/>
        <end position="27"/>
    </location>
</feature>
<feature type="helix" evidence="2">
    <location>
        <begin position="35"/>
        <end position="44"/>
    </location>
</feature>
<feature type="strand" evidence="2">
    <location>
        <begin position="47"/>
        <end position="56"/>
    </location>
</feature>
<feature type="strand" evidence="2">
    <location>
        <begin position="59"/>
        <end position="67"/>
    </location>
</feature>
<feature type="strand" evidence="2">
    <location>
        <begin position="70"/>
        <end position="72"/>
    </location>
</feature>
<feature type="strand" evidence="2">
    <location>
        <begin position="75"/>
        <end position="86"/>
    </location>
</feature>
<feature type="helix" evidence="2">
    <location>
        <begin position="88"/>
        <end position="91"/>
    </location>
</feature>
<feature type="strand" evidence="2">
    <location>
        <begin position="103"/>
        <end position="112"/>
    </location>
</feature>
<feature type="helix" evidence="2">
    <location>
        <begin position="114"/>
        <end position="125"/>
    </location>
</feature>
<feature type="strand" evidence="2">
    <location>
        <begin position="128"/>
        <end position="130"/>
    </location>
</feature>
<feature type="strand" evidence="2">
    <location>
        <begin position="133"/>
        <end position="135"/>
    </location>
</feature>
<feature type="strand" evidence="2">
    <location>
        <begin position="137"/>
        <end position="146"/>
    </location>
</feature>
<feature type="strand" evidence="2">
    <location>
        <begin position="149"/>
        <end position="155"/>
    </location>
</feature>
<feature type="strand" evidence="2">
    <location>
        <begin position="157"/>
        <end position="168"/>
    </location>
</feature>
<feature type="strand" evidence="2">
    <location>
        <begin position="171"/>
        <end position="174"/>
    </location>
</feature>
<name>BRIX_AERPE</name>
<keyword id="KW-0002">3D-structure</keyword>
<keyword id="KW-1185">Reference proteome</keyword>
<keyword id="KW-0690">Ribosome biogenesis</keyword>
<comment type="function">
    <text evidence="1">Probably involved in the biogenesis of the ribosome.</text>
</comment>
<sequence>MTTSRRPSPRIRSFVKDLSATIPGAFRFTRGHYSMEELAREAIIRGADRIVVVGERRGNPGIIRVYAVEGPERPDNIVSFIVKGVSLSRERRWGLPSLRGGEVLVARPLDSGVAVEFADAFVIAFHARLKPPEAAGYVEAVIESLDARTVAVTFRYGGAPVGPMLRLGKPAEMVKRGRRV</sequence>
<evidence type="ECO:0000255" key="1">
    <source>
        <dbReference type="HAMAP-Rule" id="MF_00699"/>
    </source>
</evidence>
<evidence type="ECO:0007829" key="2">
    <source>
        <dbReference type="PDB" id="2CXH"/>
    </source>
</evidence>
<accession>Q9YC08</accession>
<reference key="1">
    <citation type="journal article" date="1999" name="DNA Res.">
        <title>Complete genome sequence of an aerobic hyper-thermophilic crenarchaeon, Aeropyrum pernix K1.</title>
        <authorList>
            <person name="Kawarabayasi Y."/>
            <person name="Hino Y."/>
            <person name="Horikawa H."/>
            <person name="Yamazaki S."/>
            <person name="Haikawa Y."/>
            <person name="Jin-no K."/>
            <person name="Takahashi M."/>
            <person name="Sekine M."/>
            <person name="Baba S."/>
            <person name="Ankai A."/>
            <person name="Kosugi H."/>
            <person name="Hosoyama A."/>
            <person name="Fukui S."/>
            <person name="Nagai Y."/>
            <person name="Nishijima K."/>
            <person name="Nakazawa H."/>
            <person name="Takamiya M."/>
            <person name="Masuda S."/>
            <person name="Funahashi T."/>
            <person name="Tanaka T."/>
            <person name="Kudoh Y."/>
            <person name="Yamazaki J."/>
            <person name="Kushida N."/>
            <person name="Oguchi A."/>
            <person name="Aoki K."/>
            <person name="Kubota K."/>
            <person name="Nakamura Y."/>
            <person name="Nomura N."/>
            <person name="Sako Y."/>
            <person name="Kikuchi H."/>
        </authorList>
    </citation>
    <scope>NUCLEOTIDE SEQUENCE [LARGE SCALE GENOMIC DNA]</scope>
    <source>
        <strain>ATCC 700893 / DSM 11879 / JCM 9820 / NBRC 100138 / K1</strain>
    </source>
</reference>
<dbReference type="EMBL" id="BA000002">
    <property type="protein sequence ID" value="BAA80440.2"/>
    <property type="molecule type" value="Genomic_DNA"/>
</dbReference>
<dbReference type="PIR" id="B72623">
    <property type="entry name" value="B72623"/>
</dbReference>
<dbReference type="PDB" id="2CXH">
    <property type="method" value="X-ray"/>
    <property type="resolution" value="1.80 A"/>
    <property type="chains" value="A=2-180"/>
</dbReference>
<dbReference type="PDBsum" id="2CXH"/>
<dbReference type="SMR" id="Q9YC08"/>
<dbReference type="STRING" id="272557.APE_1443.1"/>
<dbReference type="EnsemblBacteria" id="BAA80440">
    <property type="protein sequence ID" value="BAA80440"/>
    <property type="gene ID" value="APE_1443.1"/>
</dbReference>
<dbReference type="KEGG" id="ape:APE_1443.1"/>
<dbReference type="eggNOG" id="arCOG03247">
    <property type="taxonomic scope" value="Archaea"/>
</dbReference>
<dbReference type="EvolutionaryTrace" id="Q9YC08"/>
<dbReference type="Proteomes" id="UP000002518">
    <property type="component" value="Chromosome"/>
</dbReference>
<dbReference type="GO" id="GO:0019843">
    <property type="term" value="F:rRNA binding"/>
    <property type="evidence" value="ECO:0007669"/>
    <property type="project" value="InterPro"/>
</dbReference>
<dbReference type="GO" id="GO:0006364">
    <property type="term" value="P:rRNA processing"/>
    <property type="evidence" value="ECO:0007669"/>
    <property type="project" value="InterPro"/>
</dbReference>
<dbReference type="Gene3D" id="3.40.50.10480">
    <property type="entry name" value="Probable brix-domain ribosomal biogenesis protein"/>
    <property type="match status" value="1"/>
</dbReference>
<dbReference type="HAMAP" id="MF_00699">
    <property type="entry name" value="BriX"/>
    <property type="match status" value="1"/>
</dbReference>
<dbReference type="InterPro" id="IPR007109">
    <property type="entry name" value="Brix"/>
</dbReference>
<dbReference type="InterPro" id="IPR023548">
    <property type="entry name" value="Brix_dom_Rbsml_bgen_prot"/>
</dbReference>
<dbReference type="SMART" id="SM00879">
    <property type="entry name" value="Brix"/>
    <property type="match status" value="1"/>
</dbReference>
<dbReference type="SUPFAM" id="SSF52954">
    <property type="entry name" value="Class II aaRS ABD-related"/>
    <property type="match status" value="1"/>
</dbReference>
<dbReference type="PROSITE" id="PS50833">
    <property type="entry name" value="BRIX"/>
    <property type="match status" value="1"/>
</dbReference>
<gene>
    <name type="ordered locus">APE_1443.1</name>
</gene>